<dbReference type="EMBL" id="CP001618">
    <property type="protein sequence ID" value="ACQ79563.1"/>
    <property type="molecule type" value="Genomic_DNA"/>
</dbReference>
<dbReference type="RefSeq" id="WP_015881803.1">
    <property type="nucleotide sequence ID" value="NC_012669.1"/>
</dbReference>
<dbReference type="SMR" id="C5C1U5"/>
<dbReference type="STRING" id="471853.Bcav_1304"/>
<dbReference type="KEGG" id="bcv:Bcav_1304"/>
<dbReference type="eggNOG" id="COG0712">
    <property type="taxonomic scope" value="Bacteria"/>
</dbReference>
<dbReference type="HOGENOM" id="CLU_088880_0_0_11"/>
<dbReference type="OrthoDB" id="5242917at2"/>
<dbReference type="Proteomes" id="UP000007962">
    <property type="component" value="Chromosome"/>
</dbReference>
<dbReference type="GO" id="GO:0005886">
    <property type="term" value="C:plasma membrane"/>
    <property type="evidence" value="ECO:0007669"/>
    <property type="project" value="UniProtKB-SubCell"/>
</dbReference>
<dbReference type="GO" id="GO:0045259">
    <property type="term" value="C:proton-transporting ATP synthase complex"/>
    <property type="evidence" value="ECO:0007669"/>
    <property type="project" value="UniProtKB-KW"/>
</dbReference>
<dbReference type="GO" id="GO:0046933">
    <property type="term" value="F:proton-transporting ATP synthase activity, rotational mechanism"/>
    <property type="evidence" value="ECO:0007669"/>
    <property type="project" value="UniProtKB-UniRule"/>
</dbReference>
<dbReference type="HAMAP" id="MF_01416">
    <property type="entry name" value="ATP_synth_delta_bact"/>
    <property type="match status" value="1"/>
</dbReference>
<dbReference type="InterPro" id="IPR020781">
    <property type="entry name" value="ATPase_OSCP/d_CS"/>
</dbReference>
<dbReference type="InterPro" id="IPR000711">
    <property type="entry name" value="ATPase_OSCP/dsu"/>
</dbReference>
<dbReference type="NCBIfam" id="NF009967">
    <property type="entry name" value="PRK13430.1"/>
    <property type="match status" value="1"/>
</dbReference>
<dbReference type="PANTHER" id="PTHR11910">
    <property type="entry name" value="ATP SYNTHASE DELTA CHAIN"/>
    <property type="match status" value="1"/>
</dbReference>
<dbReference type="Pfam" id="PF00213">
    <property type="entry name" value="OSCP"/>
    <property type="match status" value="1"/>
</dbReference>
<dbReference type="PRINTS" id="PR00125">
    <property type="entry name" value="ATPASEDELTA"/>
</dbReference>
<dbReference type="PROSITE" id="PS00389">
    <property type="entry name" value="ATPASE_DELTA"/>
    <property type="match status" value="1"/>
</dbReference>
<evidence type="ECO:0000255" key="1">
    <source>
        <dbReference type="HAMAP-Rule" id="MF_01416"/>
    </source>
</evidence>
<feature type="chain" id="PRO_1000215229" description="ATP synthase subunit delta">
    <location>
        <begin position="1"/>
        <end position="271"/>
    </location>
</feature>
<name>ATPD_BEUC1</name>
<protein>
    <recommendedName>
        <fullName evidence="1">ATP synthase subunit delta</fullName>
    </recommendedName>
    <alternativeName>
        <fullName evidence="1">ATP synthase F(1) sector subunit delta</fullName>
    </alternativeName>
    <alternativeName>
        <fullName evidence="1">F-type ATPase subunit delta</fullName>
        <shortName evidence="1">F-ATPase subunit delta</shortName>
    </alternativeName>
</protein>
<gene>
    <name evidence="1" type="primary">atpH</name>
    <name type="ordered locus">Bcav_1304</name>
</gene>
<proteinExistence type="inferred from homology"/>
<comment type="function">
    <text evidence="1">F(1)F(0) ATP synthase produces ATP from ADP in the presence of a proton or sodium gradient. F-type ATPases consist of two structural domains, F(1) containing the extramembraneous catalytic core and F(0) containing the membrane proton channel, linked together by a central stalk and a peripheral stalk. During catalysis, ATP synthesis in the catalytic domain of F(1) is coupled via a rotary mechanism of the central stalk subunits to proton translocation.</text>
</comment>
<comment type="function">
    <text evidence="1">This protein is part of the stalk that links CF(0) to CF(1). It either transmits conformational changes from CF(0) to CF(1) or is implicated in proton conduction.</text>
</comment>
<comment type="subunit">
    <text evidence="1">F-type ATPases have 2 components, F(1) - the catalytic core - and F(0) - the membrane proton channel. F(1) has five subunits: alpha(3), beta(3), gamma(1), delta(1), epsilon(1). F(0) has three main subunits: a(1), b(2) and c(10-14). The alpha and beta chains form an alternating ring which encloses part of the gamma chain. F(1) is attached to F(0) by a central stalk formed by the gamma and epsilon chains, while a peripheral stalk is formed by the delta and b chains.</text>
</comment>
<comment type="subcellular location">
    <subcellularLocation>
        <location evidence="1">Cell membrane</location>
        <topology evidence="1">Peripheral membrane protein</topology>
    </subcellularLocation>
</comment>
<comment type="similarity">
    <text evidence="1">Belongs to the ATPase delta chain family.</text>
</comment>
<sequence>MRASSEASLKAAADRWEPVLAEAGESARDLAESIFAVVDALDSSASLRRALTDPARPADAKASLTQGLLGAKAPDAVVDLVAGMSRSRWSADDDLASALEEIGTTSLLAAAESRGELERVEDELFRLGRSLIGARELRIALSNRELPVENRVALVDALLEGKVAPETELLVRRAATSMRERSVPNAIAHVGELAAARRRRLVAAVTAAVPLTQGQLTRLGEILERAYGRSVQINVGIDPEVVGGLRVQVGAEVVDATVLTKLEEARRRLAG</sequence>
<reference key="1">
    <citation type="journal article" date="2009" name="Stand. Genomic Sci.">
        <title>Complete genome sequence of Beutenbergia cavernae type strain (HKI 0122).</title>
        <authorList>
            <person name="Land M."/>
            <person name="Pukall R."/>
            <person name="Abt B."/>
            <person name="Goker M."/>
            <person name="Rohde M."/>
            <person name="Glavina Del Rio T."/>
            <person name="Tice H."/>
            <person name="Copeland A."/>
            <person name="Cheng J.F."/>
            <person name="Lucas S."/>
            <person name="Chen F."/>
            <person name="Nolan M."/>
            <person name="Bruce D."/>
            <person name="Goodwin L."/>
            <person name="Pitluck S."/>
            <person name="Ivanova N."/>
            <person name="Mavromatis K."/>
            <person name="Ovchinnikova G."/>
            <person name="Pati A."/>
            <person name="Chen A."/>
            <person name="Palaniappan K."/>
            <person name="Hauser L."/>
            <person name="Chang Y.J."/>
            <person name="Jefferies C.C."/>
            <person name="Saunders E."/>
            <person name="Brettin T."/>
            <person name="Detter J.C."/>
            <person name="Han C."/>
            <person name="Chain P."/>
            <person name="Bristow J."/>
            <person name="Eisen J.A."/>
            <person name="Markowitz V."/>
            <person name="Hugenholtz P."/>
            <person name="Kyrpides N.C."/>
            <person name="Klenk H.P."/>
            <person name="Lapidus A."/>
        </authorList>
    </citation>
    <scope>NUCLEOTIDE SEQUENCE [LARGE SCALE GENOMIC DNA]</scope>
    <source>
        <strain>ATCC BAA-8 / DSM 12333 / CCUG 43141 / JCM 11478 / NBRC 16432 / NCIMB 13614 / HKI 0122</strain>
    </source>
</reference>
<keyword id="KW-0066">ATP synthesis</keyword>
<keyword id="KW-1003">Cell membrane</keyword>
<keyword id="KW-0139">CF(1)</keyword>
<keyword id="KW-0375">Hydrogen ion transport</keyword>
<keyword id="KW-0406">Ion transport</keyword>
<keyword id="KW-0472">Membrane</keyword>
<keyword id="KW-1185">Reference proteome</keyword>
<keyword id="KW-0813">Transport</keyword>
<organism>
    <name type="scientific">Beutenbergia cavernae (strain ATCC BAA-8 / DSM 12333 / CCUG 43141 / JCM 11478 / NBRC 16432 / NCIMB 13614 / HKI 0122)</name>
    <dbReference type="NCBI Taxonomy" id="471853"/>
    <lineage>
        <taxon>Bacteria</taxon>
        <taxon>Bacillati</taxon>
        <taxon>Actinomycetota</taxon>
        <taxon>Actinomycetes</taxon>
        <taxon>Micrococcales</taxon>
        <taxon>Beutenbergiaceae</taxon>
        <taxon>Beutenbergia</taxon>
    </lineage>
</organism>
<accession>C5C1U5</accession>